<sequence>MSMVETAPSKIQVRDLNFYYGKFHALKNINLDIAKNQVTAFIGPSGCGKSTLLRTFNKMYSLYPEQRAEGEILLDGDNILTNTQDIALLRAKVGMVFQKPTPFPMSIYDNIAFGVRLFEKLSRADMDERVQWALTKAALWNETKDKLHQSGYSLSGGQQQRLCIARGIAIRPEVLLLDEPCSALDPISTGRIEELITELKQDYTVVIVTHNMQQAARCSDHTAFMYLGELIEFSNTDDLFTKPAKKQTEDYITGRYG</sequence>
<feature type="initiator methionine" description="Removed" evidence="1">
    <location>
        <position position="1"/>
    </location>
</feature>
<feature type="chain" id="PRO_0000272522" description="Phosphate import ATP-binding protein PstB">
    <location>
        <begin position="2"/>
        <end position="257"/>
    </location>
</feature>
<feature type="domain" description="ABC transporter" evidence="2">
    <location>
        <begin position="11"/>
        <end position="252"/>
    </location>
</feature>
<feature type="binding site" evidence="2">
    <location>
        <begin position="43"/>
        <end position="50"/>
    </location>
    <ligand>
        <name>ATP</name>
        <dbReference type="ChEBI" id="CHEBI:30616"/>
    </ligand>
</feature>
<reference key="1">
    <citation type="journal article" date="2004" name="Nat. Genet.">
        <title>Comparison of genome degradation in Paratyphi A and Typhi, human-restricted serovars of Salmonella enterica that cause typhoid.</title>
        <authorList>
            <person name="McClelland M."/>
            <person name="Sanderson K.E."/>
            <person name="Clifton S.W."/>
            <person name="Latreille P."/>
            <person name="Porwollik S."/>
            <person name="Sabo A."/>
            <person name="Meyer R."/>
            <person name="Bieri T."/>
            <person name="Ozersky P."/>
            <person name="McLellan M."/>
            <person name="Harkins C.R."/>
            <person name="Wang C."/>
            <person name="Nguyen C."/>
            <person name="Berghoff A."/>
            <person name="Elliott G."/>
            <person name="Kohlberg S."/>
            <person name="Strong C."/>
            <person name="Du F."/>
            <person name="Carter J."/>
            <person name="Kremizki C."/>
            <person name="Layman D."/>
            <person name="Leonard S."/>
            <person name="Sun H."/>
            <person name="Fulton L."/>
            <person name="Nash W."/>
            <person name="Miner T."/>
            <person name="Minx P."/>
            <person name="Delehaunty K."/>
            <person name="Fronick C."/>
            <person name="Magrini V."/>
            <person name="Nhan M."/>
            <person name="Warren W."/>
            <person name="Florea L."/>
            <person name="Spieth J."/>
            <person name="Wilson R.K."/>
        </authorList>
    </citation>
    <scope>NUCLEOTIDE SEQUENCE [LARGE SCALE GENOMIC DNA]</scope>
    <source>
        <strain>ATCC 9150 / SARB42</strain>
    </source>
</reference>
<organism>
    <name type="scientific">Salmonella paratyphi A (strain ATCC 9150 / SARB42)</name>
    <dbReference type="NCBI Taxonomy" id="295319"/>
    <lineage>
        <taxon>Bacteria</taxon>
        <taxon>Pseudomonadati</taxon>
        <taxon>Pseudomonadota</taxon>
        <taxon>Gammaproteobacteria</taxon>
        <taxon>Enterobacterales</taxon>
        <taxon>Enterobacteriaceae</taxon>
        <taxon>Salmonella</taxon>
    </lineage>
</organism>
<gene>
    <name evidence="2" type="primary">pstB</name>
    <name type="ordered locus">SPA3695</name>
</gene>
<protein>
    <recommendedName>
        <fullName evidence="2">Phosphate import ATP-binding protein PstB</fullName>
        <ecNumber evidence="2">7.3.2.1</ecNumber>
    </recommendedName>
    <alternativeName>
        <fullName evidence="2">ABC phosphate transporter</fullName>
    </alternativeName>
    <alternativeName>
        <fullName evidence="2">Phosphate-transporting ATPase</fullName>
    </alternativeName>
</protein>
<dbReference type="EC" id="7.3.2.1" evidence="2"/>
<dbReference type="EMBL" id="CP000026">
    <property type="protein sequence ID" value="AAV79487.1"/>
    <property type="molecule type" value="Genomic_DNA"/>
</dbReference>
<dbReference type="RefSeq" id="WP_000063118.1">
    <property type="nucleotide sequence ID" value="NC_006511.1"/>
</dbReference>
<dbReference type="SMR" id="Q5PKW4"/>
<dbReference type="GeneID" id="66758143"/>
<dbReference type="KEGG" id="spt:SPA3695"/>
<dbReference type="HOGENOM" id="CLU_000604_1_22_6"/>
<dbReference type="Proteomes" id="UP000008185">
    <property type="component" value="Chromosome"/>
</dbReference>
<dbReference type="GO" id="GO:0005886">
    <property type="term" value="C:plasma membrane"/>
    <property type="evidence" value="ECO:0007669"/>
    <property type="project" value="UniProtKB-SubCell"/>
</dbReference>
<dbReference type="GO" id="GO:0005524">
    <property type="term" value="F:ATP binding"/>
    <property type="evidence" value="ECO:0007669"/>
    <property type="project" value="UniProtKB-KW"/>
</dbReference>
<dbReference type="GO" id="GO:0016887">
    <property type="term" value="F:ATP hydrolysis activity"/>
    <property type="evidence" value="ECO:0007669"/>
    <property type="project" value="InterPro"/>
</dbReference>
<dbReference type="GO" id="GO:0015415">
    <property type="term" value="F:ATPase-coupled phosphate ion transmembrane transporter activity"/>
    <property type="evidence" value="ECO:0007669"/>
    <property type="project" value="UniProtKB-EC"/>
</dbReference>
<dbReference type="GO" id="GO:0035435">
    <property type="term" value="P:phosphate ion transmembrane transport"/>
    <property type="evidence" value="ECO:0007669"/>
    <property type="project" value="InterPro"/>
</dbReference>
<dbReference type="CDD" id="cd03260">
    <property type="entry name" value="ABC_PstB_phosphate_transporter"/>
    <property type="match status" value="1"/>
</dbReference>
<dbReference type="FunFam" id="3.40.50.300:FF:000132">
    <property type="entry name" value="Phosphate import ATP-binding protein PstB"/>
    <property type="match status" value="1"/>
</dbReference>
<dbReference type="Gene3D" id="3.40.50.300">
    <property type="entry name" value="P-loop containing nucleotide triphosphate hydrolases"/>
    <property type="match status" value="1"/>
</dbReference>
<dbReference type="InterPro" id="IPR003593">
    <property type="entry name" value="AAA+_ATPase"/>
</dbReference>
<dbReference type="InterPro" id="IPR003439">
    <property type="entry name" value="ABC_transporter-like_ATP-bd"/>
</dbReference>
<dbReference type="InterPro" id="IPR017871">
    <property type="entry name" value="ABC_transporter-like_CS"/>
</dbReference>
<dbReference type="InterPro" id="IPR027417">
    <property type="entry name" value="P-loop_NTPase"/>
</dbReference>
<dbReference type="InterPro" id="IPR005670">
    <property type="entry name" value="PstB-like"/>
</dbReference>
<dbReference type="NCBIfam" id="TIGR00972">
    <property type="entry name" value="3a0107s01c2"/>
    <property type="match status" value="1"/>
</dbReference>
<dbReference type="PANTHER" id="PTHR43423">
    <property type="entry name" value="ABC TRANSPORTER I FAMILY MEMBER 17"/>
    <property type="match status" value="1"/>
</dbReference>
<dbReference type="PANTHER" id="PTHR43423:SF3">
    <property type="entry name" value="PHOSPHATE IMPORT ATP-BINDING PROTEIN PSTB"/>
    <property type="match status" value="1"/>
</dbReference>
<dbReference type="Pfam" id="PF00005">
    <property type="entry name" value="ABC_tran"/>
    <property type="match status" value="1"/>
</dbReference>
<dbReference type="SMART" id="SM00382">
    <property type="entry name" value="AAA"/>
    <property type="match status" value="1"/>
</dbReference>
<dbReference type="SUPFAM" id="SSF52540">
    <property type="entry name" value="P-loop containing nucleoside triphosphate hydrolases"/>
    <property type="match status" value="1"/>
</dbReference>
<dbReference type="PROSITE" id="PS00211">
    <property type="entry name" value="ABC_TRANSPORTER_1"/>
    <property type="match status" value="1"/>
</dbReference>
<dbReference type="PROSITE" id="PS50893">
    <property type="entry name" value="ABC_TRANSPORTER_2"/>
    <property type="match status" value="1"/>
</dbReference>
<dbReference type="PROSITE" id="PS51238">
    <property type="entry name" value="PSTB"/>
    <property type="match status" value="1"/>
</dbReference>
<name>PSTB_SALPA</name>
<keyword id="KW-0067">ATP-binding</keyword>
<keyword id="KW-0997">Cell inner membrane</keyword>
<keyword id="KW-1003">Cell membrane</keyword>
<keyword id="KW-0472">Membrane</keyword>
<keyword id="KW-0547">Nucleotide-binding</keyword>
<keyword id="KW-0592">Phosphate transport</keyword>
<keyword id="KW-1278">Translocase</keyword>
<keyword id="KW-0813">Transport</keyword>
<evidence type="ECO:0000250" key="1"/>
<evidence type="ECO:0000255" key="2">
    <source>
        <dbReference type="HAMAP-Rule" id="MF_01702"/>
    </source>
</evidence>
<accession>Q5PKW4</accession>
<proteinExistence type="inferred from homology"/>
<comment type="function">
    <text evidence="2">Part of the ABC transporter complex PstSACB involved in phosphate import. Responsible for energy coupling to the transport system.</text>
</comment>
<comment type="catalytic activity">
    <reaction evidence="2">
        <text>phosphate(out) + ATP + H2O = ADP + 2 phosphate(in) + H(+)</text>
        <dbReference type="Rhea" id="RHEA:24440"/>
        <dbReference type="ChEBI" id="CHEBI:15377"/>
        <dbReference type="ChEBI" id="CHEBI:15378"/>
        <dbReference type="ChEBI" id="CHEBI:30616"/>
        <dbReference type="ChEBI" id="CHEBI:43474"/>
        <dbReference type="ChEBI" id="CHEBI:456216"/>
        <dbReference type="EC" id="7.3.2.1"/>
    </reaction>
</comment>
<comment type="subunit">
    <text evidence="2">The complex is composed of two ATP-binding proteins (PstB), two transmembrane proteins (PstC and PstA) and a solute-binding protein (PstS).</text>
</comment>
<comment type="subcellular location">
    <subcellularLocation>
        <location evidence="2">Cell inner membrane</location>
        <topology evidence="2">Peripheral membrane protein</topology>
    </subcellularLocation>
</comment>
<comment type="similarity">
    <text evidence="2">Belongs to the ABC transporter superfamily. Phosphate importer (TC 3.A.1.7) family.</text>
</comment>